<reference key="1">
    <citation type="journal article" date="2012" name="FEBS J.">
        <title>Multicomponent venom of the spider Cupiennius salei: a bioanalytical investigation applying different strategies.</title>
        <authorList>
            <person name="Trachsel C."/>
            <person name="Siegemund D."/>
            <person name="Kampfer U."/>
            <person name="Kopp L.S."/>
            <person name="Buhr C."/>
            <person name="Grossmann J."/>
            <person name="Luthi C."/>
            <person name="Cunningham M."/>
            <person name="Nentwig W."/>
            <person name="Kuhn-Nentwig L."/>
            <person name="Schurch S."/>
            <person name="Schaller J."/>
        </authorList>
    </citation>
    <scope>PROTEIN SEQUENCE</scope>
    <scope>MASS SPECTROMETRY</scope>
    <scope>DISULFIDE BONDS</scope>
    <scope>SUBCELLULAR LOCATION</scope>
    <source>
        <tissue>Venom</tissue>
    </source>
</reference>
<dbReference type="SMR" id="B3EWS8"/>
<dbReference type="GO" id="GO:0005576">
    <property type="term" value="C:extracellular region"/>
    <property type="evidence" value="ECO:0007669"/>
    <property type="project" value="UniProtKB-SubCell"/>
</dbReference>
<dbReference type="GO" id="GO:0090729">
    <property type="term" value="F:toxin activity"/>
    <property type="evidence" value="ECO:0007669"/>
    <property type="project" value="UniProtKB-KW"/>
</dbReference>
<dbReference type="InterPro" id="IPR011142">
    <property type="entry name" value="Spider_toxin_CSTX_Knottin_CS"/>
</dbReference>
<dbReference type="PROSITE" id="PS60029">
    <property type="entry name" value="SPIDER_CSTX"/>
    <property type="match status" value="1"/>
</dbReference>
<protein>
    <recommendedName>
        <fullName evidence="5">Toxin CSTX-15</fullName>
    </recommendedName>
    <component>
        <recommendedName>
            <fullName evidence="5">CSTX-15 A chain</fullName>
        </recommendedName>
    </component>
    <component>
        <recommendedName>
            <fullName evidence="5">CSTX-15 B chain</fullName>
        </recommendedName>
    </component>
</protein>
<feature type="peptide" id="PRO_0000421185" description="CSTX-15 A chain" evidence="4">
    <location>
        <begin position="1"/>
        <end position="34"/>
    </location>
</feature>
<feature type="peptide" id="PRO_0000421186" description="CSTX-15 B chain" evidence="4">
    <location>
        <begin position="35"/>
        <end position="48"/>
    </location>
</feature>
<feature type="disulfide bond" evidence="2">
    <location>
        <begin position="3"/>
        <end position="18"/>
    </location>
</feature>
<feature type="disulfide bond" evidence="2">
    <location>
        <begin position="10"/>
        <end position="27"/>
    </location>
</feature>
<feature type="disulfide bond" description="Interchain (between A and B chains)" evidence="2">
    <location>
        <begin position="17"/>
        <end position="42"/>
    </location>
</feature>
<feature type="disulfide bond" description="Interchain (between A and B chains)" evidence="2">
    <location>
        <begin position="29"/>
        <end position="40"/>
    </location>
</feature>
<feature type="non-consecutive residues" evidence="5">
    <location>
        <begin position="34"/>
        <end position="35"/>
    </location>
</feature>
<keyword id="KW-0903">Direct protein sequencing</keyword>
<keyword id="KW-1015">Disulfide bond</keyword>
<keyword id="KW-0960">Knottin</keyword>
<keyword id="KW-0964">Secreted</keyword>
<keyword id="KW-0800">Toxin</keyword>
<sequence>SDCTLRNHDCTDDRHSCCRSKMFKDVCTCFYPSQAKKELCTCQQPKHL</sequence>
<organism>
    <name type="scientific">Cupiennius salei</name>
    <name type="common">American wandering spider</name>
    <dbReference type="NCBI Taxonomy" id="6928"/>
    <lineage>
        <taxon>Eukaryota</taxon>
        <taxon>Metazoa</taxon>
        <taxon>Ecdysozoa</taxon>
        <taxon>Arthropoda</taxon>
        <taxon>Chelicerata</taxon>
        <taxon>Arachnida</taxon>
        <taxon>Araneae</taxon>
        <taxon>Araneomorphae</taxon>
        <taxon>Entelegynae</taxon>
        <taxon>Lycosoidea</taxon>
        <taxon>Ctenidae</taxon>
        <taxon>Cupiennius</taxon>
    </lineage>
</organism>
<name>TXC15_CUPSA</name>
<evidence type="ECO:0000250" key="1">
    <source>
        <dbReference type="UniProtKB" id="P58604"/>
    </source>
</evidence>
<evidence type="ECO:0000250" key="2">
    <source>
        <dbReference type="UniProtKB" id="P83919"/>
    </source>
</evidence>
<evidence type="ECO:0000255" key="3"/>
<evidence type="ECO:0000269" key="4">
    <source>
    </source>
</evidence>
<evidence type="ECO:0000303" key="5">
    <source>
    </source>
</evidence>
<evidence type="ECO:0000305" key="6"/>
<evidence type="ECO:0000305" key="7">
    <source>
    </source>
</evidence>
<accession>B3EWS8</accession>
<proteinExistence type="evidence at protein level"/>
<comment type="subunit">
    <text evidence="2">Heterodimer of A and B chains; disulfide-linked.</text>
</comment>
<comment type="subcellular location">
    <subcellularLocation>
        <location evidence="4">Secreted</location>
    </subcellularLocation>
</comment>
<comment type="tissue specificity">
    <text evidence="7">Expressed by the venom gland.</text>
</comment>
<comment type="domain">
    <text evidence="1">The presence of a 'disulfide through disulfide knot' structurally defines this protein as a knottin.</text>
</comment>
<comment type="PTM">
    <text evidence="4">Contains 4 disulfide bonds.</text>
</comment>
<comment type="mass spectrometry">
    <molecule>CSTX-15 A chain</molecule>
</comment>
<comment type="mass spectrometry">
    <molecule>CSTX-15 B chain</molecule>
</comment>
<comment type="similarity">
    <text evidence="3">Belongs to the neurotoxin 19 (CSTX) family. 12 subfamily.</text>
</comment>
<comment type="caution">
    <text evidence="6">It is probable that CSTX-15 A and B chains originate from the same gene. Both chains may be separated by some amino acids.</text>
</comment>
<comment type="caution">
    <text evidence="6">May be a cleavage product of CSTX-13.</text>
</comment>